<organism>
    <name type="scientific">Jannaschia sp. (strain CCS1)</name>
    <dbReference type="NCBI Taxonomy" id="290400"/>
    <lineage>
        <taxon>Bacteria</taxon>
        <taxon>Pseudomonadati</taxon>
        <taxon>Pseudomonadota</taxon>
        <taxon>Alphaproteobacteria</taxon>
        <taxon>Rhodobacterales</taxon>
        <taxon>Roseobacteraceae</taxon>
        <taxon>Jannaschia</taxon>
    </lineage>
</organism>
<keyword id="KW-1185">Reference proteome</keyword>
<keyword id="KW-0687">Ribonucleoprotein</keyword>
<keyword id="KW-0689">Ribosomal protein</keyword>
<keyword id="KW-0694">RNA-binding</keyword>
<keyword id="KW-0699">rRNA-binding</keyword>
<keyword id="KW-0820">tRNA-binding</keyword>
<dbReference type="EMBL" id="CP000264">
    <property type="protein sequence ID" value="ABD53493.1"/>
    <property type="molecule type" value="Genomic_DNA"/>
</dbReference>
<dbReference type="RefSeq" id="WP_011453702.1">
    <property type="nucleotide sequence ID" value="NC_007802.1"/>
</dbReference>
<dbReference type="SMR" id="Q28UW9"/>
<dbReference type="STRING" id="290400.Jann_0576"/>
<dbReference type="KEGG" id="jan:Jann_0576"/>
<dbReference type="eggNOG" id="COG0049">
    <property type="taxonomic scope" value="Bacteria"/>
</dbReference>
<dbReference type="HOGENOM" id="CLU_072226_1_1_5"/>
<dbReference type="OrthoDB" id="9807653at2"/>
<dbReference type="Proteomes" id="UP000008326">
    <property type="component" value="Chromosome"/>
</dbReference>
<dbReference type="GO" id="GO:0015935">
    <property type="term" value="C:small ribosomal subunit"/>
    <property type="evidence" value="ECO:0007669"/>
    <property type="project" value="InterPro"/>
</dbReference>
<dbReference type="GO" id="GO:0019843">
    <property type="term" value="F:rRNA binding"/>
    <property type="evidence" value="ECO:0007669"/>
    <property type="project" value="UniProtKB-UniRule"/>
</dbReference>
<dbReference type="GO" id="GO:0003735">
    <property type="term" value="F:structural constituent of ribosome"/>
    <property type="evidence" value="ECO:0007669"/>
    <property type="project" value="InterPro"/>
</dbReference>
<dbReference type="GO" id="GO:0000049">
    <property type="term" value="F:tRNA binding"/>
    <property type="evidence" value="ECO:0007669"/>
    <property type="project" value="UniProtKB-UniRule"/>
</dbReference>
<dbReference type="GO" id="GO:0006412">
    <property type="term" value="P:translation"/>
    <property type="evidence" value="ECO:0007669"/>
    <property type="project" value="UniProtKB-UniRule"/>
</dbReference>
<dbReference type="CDD" id="cd14869">
    <property type="entry name" value="uS7_Bacteria"/>
    <property type="match status" value="1"/>
</dbReference>
<dbReference type="FunFam" id="1.10.455.10:FF:000001">
    <property type="entry name" value="30S ribosomal protein S7"/>
    <property type="match status" value="1"/>
</dbReference>
<dbReference type="Gene3D" id="1.10.455.10">
    <property type="entry name" value="Ribosomal protein S7 domain"/>
    <property type="match status" value="1"/>
</dbReference>
<dbReference type="HAMAP" id="MF_00480_B">
    <property type="entry name" value="Ribosomal_uS7_B"/>
    <property type="match status" value="1"/>
</dbReference>
<dbReference type="InterPro" id="IPR000235">
    <property type="entry name" value="Ribosomal_uS7"/>
</dbReference>
<dbReference type="InterPro" id="IPR005717">
    <property type="entry name" value="Ribosomal_uS7_bac/org-type"/>
</dbReference>
<dbReference type="InterPro" id="IPR020606">
    <property type="entry name" value="Ribosomal_uS7_CS"/>
</dbReference>
<dbReference type="InterPro" id="IPR023798">
    <property type="entry name" value="Ribosomal_uS7_dom"/>
</dbReference>
<dbReference type="InterPro" id="IPR036823">
    <property type="entry name" value="Ribosomal_uS7_dom_sf"/>
</dbReference>
<dbReference type="NCBIfam" id="TIGR01029">
    <property type="entry name" value="rpsG_bact"/>
    <property type="match status" value="1"/>
</dbReference>
<dbReference type="PANTHER" id="PTHR11205">
    <property type="entry name" value="RIBOSOMAL PROTEIN S7"/>
    <property type="match status" value="1"/>
</dbReference>
<dbReference type="Pfam" id="PF00177">
    <property type="entry name" value="Ribosomal_S7"/>
    <property type="match status" value="1"/>
</dbReference>
<dbReference type="PIRSF" id="PIRSF002122">
    <property type="entry name" value="RPS7p_RPS7a_RPS5e_RPS7o"/>
    <property type="match status" value="1"/>
</dbReference>
<dbReference type="SUPFAM" id="SSF47973">
    <property type="entry name" value="Ribosomal protein S7"/>
    <property type="match status" value="1"/>
</dbReference>
<dbReference type="PROSITE" id="PS00052">
    <property type="entry name" value="RIBOSOMAL_S7"/>
    <property type="match status" value="1"/>
</dbReference>
<accession>Q28UW9</accession>
<reference key="1">
    <citation type="submission" date="2006-02" db="EMBL/GenBank/DDBJ databases">
        <title>Complete sequence of chromosome of Jannaschia sp. CCS1.</title>
        <authorList>
            <consortium name="US DOE Joint Genome Institute"/>
            <person name="Copeland A."/>
            <person name="Lucas S."/>
            <person name="Lapidus A."/>
            <person name="Barry K."/>
            <person name="Detter J.C."/>
            <person name="Glavina del Rio T."/>
            <person name="Hammon N."/>
            <person name="Israni S."/>
            <person name="Pitluck S."/>
            <person name="Brettin T."/>
            <person name="Bruce D."/>
            <person name="Han C."/>
            <person name="Tapia R."/>
            <person name="Gilna P."/>
            <person name="Chertkov O."/>
            <person name="Saunders E."/>
            <person name="Schmutz J."/>
            <person name="Larimer F."/>
            <person name="Land M."/>
            <person name="Kyrpides N."/>
            <person name="Lykidis A."/>
            <person name="Moran M.A."/>
            <person name="Belas R."/>
            <person name="Ye W."/>
            <person name="Buchan A."/>
            <person name="Gonzalez J.M."/>
            <person name="Schell M.A."/>
            <person name="Richardson P."/>
        </authorList>
    </citation>
    <scope>NUCLEOTIDE SEQUENCE [LARGE SCALE GENOMIC DNA]</scope>
    <source>
        <strain>CCS1</strain>
    </source>
</reference>
<sequence length="156" mass="17945">MSRRHAAEKRQVLPDAKFGDMVLTKFMNNLMIDGKKAVAERIVYNAFDRVEGKLKRAPVEVFHEALENIKPAVEVRSRRVGGATYQVPVDVRPERREALAIRWLINASRARNENTMEERLAGELVDAVNMRGSAVKKREDTHKMADANRAFSHYRW</sequence>
<proteinExistence type="inferred from homology"/>
<comment type="function">
    <text evidence="1">One of the primary rRNA binding proteins, it binds directly to 16S rRNA where it nucleates assembly of the head domain of the 30S subunit. Is located at the subunit interface close to the decoding center, probably blocks exit of the E-site tRNA.</text>
</comment>
<comment type="subunit">
    <text evidence="1">Part of the 30S ribosomal subunit. Contacts proteins S9 and S11.</text>
</comment>
<comment type="similarity">
    <text evidence="1">Belongs to the universal ribosomal protein uS7 family.</text>
</comment>
<name>RS7_JANSC</name>
<protein>
    <recommendedName>
        <fullName evidence="1">Small ribosomal subunit protein uS7</fullName>
    </recommendedName>
    <alternativeName>
        <fullName evidence="2">30S ribosomal protein S7</fullName>
    </alternativeName>
</protein>
<evidence type="ECO:0000255" key="1">
    <source>
        <dbReference type="HAMAP-Rule" id="MF_00480"/>
    </source>
</evidence>
<evidence type="ECO:0000305" key="2"/>
<gene>
    <name evidence="1" type="primary">rpsG</name>
    <name type="ordered locus">Jann_0576</name>
</gene>
<feature type="chain" id="PRO_0000241759" description="Small ribosomal subunit protein uS7">
    <location>
        <begin position="1"/>
        <end position="156"/>
    </location>
</feature>